<keyword id="KW-0012">Acyltransferase</keyword>
<keyword id="KW-0414">Isoprene biosynthesis</keyword>
<keyword id="KW-0808">Transferase</keyword>
<protein>
    <recommendedName>
        <fullName evidence="1">Hydroxymethylglutaryl-CoA synthase</fullName>
        <shortName evidence="1">HMG-CoA synthase</shortName>
        <shortName evidence="1">HMGCS</shortName>
        <ecNumber evidence="1">2.3.3.10</ecNumber>
    </recommendedName>
</protein>
<reference key="1">
    <citation type="submission" date="2007-04" db="EMBL/GenBank/DDBJ databases">
        <title>Complete sequence of Pyrobaculum arsenaticum DSM 13514.</title>
        <authorList>
            <consortium name="US DOE Joint Genome Institute"/>
            <person name="Copeland A."/>
            <person name="Lucas S."/>
            <person name="Lapidus A."/>
            <person name="Barry K."/>
            <person name="Glavina del Rio T."/>
            <person name="Dalin E."/>
            <person name="Tice H."/>
            <person name="Pitluck S."/>
            <person name="Chain P."/>
            <person name="Malfatti S."/>
            <person name="Shin M."/>
            <person name="Vergez L."/>
            <person name="Schmutz J."/>
            <person name="Larimer F."/>
            <person name="Land M."/>
            <person name="Hauser L."/>
            <person name="Kyrpides N."/>
            <person name="Mikhailova N."/>
            <person name="Cozen A.E."/>
            <person name="Fitz-Gibbon S.T."/>
            <person name="House C.H."/>
            <person name="Saltikov C."/>
            <person name="Lowe T.M."/>
            <person name="Richardson P."/>
        </authorList>
    </citation>
    <scope>NUCLEOTIDE SEQUENCE [LARGE SCALE GENOMIC DNA]</scope>
    <source>
        <strain>ATCC 700994 / DSM 13514 / JCM 11321 / PZ6</strain>
    </source>
</reference>
<accession>A4WJ12</accession>
<comment type="function">
    <text evidence="1">Catalyzes the condensation of acetyl-CoA with acetoacetyl-CoA to form 3-hydroxy-3-methylglutaryl-CoA (HMG-CoA). Functions in the mevalonate (MVA) pathway leading to isopentenyl diphosphate (IPP), a key precursor for the biosynthesis of isoprenoid compounds that are building blocks of archaeal membrane lipids.</text>
</comment>
<comment type="catalytic activity">
    <reaction evidence="1">
        <text>acetoacetyl-CoA + acetyl-CoA + H2O = (3S)-3-hydroxy-3-methylglutaryl-CoA + CoA + H(+)</text>
        <dbReference type="Rhea" id="RHEA:10188"/>
        <dbReference type="ChEBI" id="CHEBI:15377"/>
        <dbReference type="ChEBI" id="CHEBI:15378"/>
        <dbReference type="ChEBI" id="CHEBI:43074"/>
        <dbReference type="ChEBI" id="CHEBI:57286"/>
        <dbReference type="ChEBI" id="CHEBI:57287"/>
        <dbReference type="ChEBI" id="CHEBI:57288"/>
        <dbReference type="EC" id="2.3.3.10"/>
    </reaction>
    <physiologicalReaction direction="left-to-right" evidence="1">
        <dbReference type="Rhea" id="RHEA:10189"/>
    </physiologicalReaction>
</comment>
<comment type="pathway">
    <text evidence="1">Metabolic intermediate biosynthesis; (R)-mevalonate biosynthesis; (R)-mevalonate from acetyl-CoA: step 2/3.</text>
</comment>
<comment type="subunit">
    <text evidence="1">Interacts with acetoacetyl-CoA thiolase that catalyzes the precedent step in the pathway and with a DUF35 protein. The acetoacetyl-CoA thiolase/HMG-CoA synthase complex channels the intermediate via a fused CoA-binding site, which allows for efficient coupling of the endergonic thiolase reaction with the exergonic HMGCS reaction.</text>
</comment>
<comment type="similarity">
    <text evidence="1">Belongs to the thiolase-like superfamily. Archaeal HMG-CoA synthase family.</text>
</comment>
<dbReference type="EC" id="2.3.3.10" evidence="1"/>
<dbReference type="EMBL" id="CP000660">
    <property type="protein sequence ID" value="ABP50379.1"/>
    <property type="molecule type" value="Genomic_DNA"/>
</dbReference>
<dbReference type="SMR" id="A4WJ12"/>
<dbReference type="STRING" id="340102.Pars_0793"/>
<dbReference type="KEGG" id="pas:Pars_0793"/>
<dbReference type="HOGENOM" id="CLU_039592_7_0_2"/>
<dbReference type="OrthoDB" id="5812at2157"/>
<dbReference type="PhylomeDB" id="A4WJ12"/>
<dbReference type="UniPathway" id="UPA00058">
    <property type="reaction ID" value="UER00102"/>
</dbReference>
<dbReference type="Proteomes" id="UP000001567">
    <property type="component" value="Chromosome"/>
</dbReference>
<dbReference type="GO" id="GO:0003985">
    <property type="term" value="F:acetyl-CoA C-acetyltransferase activity"/>
    <property type="evidence" value="ECO:0007669"/>
    <property type="project" value="UniProtKB-UniRule"/>
</dbReference>
<dbReference type="GO" id="GO:0004421">
    <property type="term" value="F:hydroxymethylglutaryl-CoA synthase activity"/>
    <property type="evidence" value="ECO:0007669"/>
    <property type="project" value="InterPro"/>
</dbReference>
<dbReference type="GO" id="GO:0010142">
    <property type="term" value="P:farnesyl diphosphate biosynthetic process, mevalonate pathway"/>
    <property type="evidence" value="ECO:0007669"/>
    <property type="project" value="TreeGrafter"/>
</dbReference>
<dbReference type="GO" id="GO:0019287">
    <property type="term" value="P:isopentenyl diphosphate biosynthetic process, mevalonate pathway"/>
    <property type="evidence" value="ECO:0007669"/>
    <property type="project" value="UniProtKB-UniRule"/>
</dbReference>
<dbReference type="CDD" id="cd00827">
    <property type="entry name" value="init_cond_enzymes"/>
    <property type="match status" value="1"/>
</dbReference>
<dbReference type="FunFam" id="3.40.47.10:FF:000046">
    <property type="entry name" value="UPF0219 protein M1627_1703"/>
    <property type="match status" value="1"/>
</dbReference>
<dbReference type="Gene3D" id="3.40.47.10">
    <property type="match status" value="1"/>
</dbReference>
<dbReference type="HAMAP" id="MF_01409">
    <property type="entry name" value="HMG_CoA_synth_arch"/>
    <property type="match status" value="1"/>
</dbReference>
<dbReference type="InterPro" id="IPR013747">
    <property type="entry name" value="ACP_syn_III_C"/>
</dbReference>
<dbReference type="InterPro" id="IPR004656">
    <property type="entry name" value="HMG_CoA_Synthase"/>
</dbReference>
<dbReference type="InterPro" id="IPR016039">
    <property type="entry name" value="Thiolase-like"/>
</dbReference>
<dbReference type="InterPro" id="IPR020616">
    <property type="entry name" value="Thiolase_N"/>
</dbReference>
<dbReference type="NCBIfam" id="TIGR00748">
    <property type="entry name" value="HMG_CoA_syn_Arc"/>
    <property type="match status" value="1"/>
</dbReference>
<dbReference type="NCBIfam" id="NF003274">
    <property type="entry name" value="PRK04262.1"/>
    <property type="match status" value="1"/>
</dbReference>
<dbReference type="PANTHER" id="PTHR43323">
    <property type="entry name" value="3-HYDROXY-3-METHYLGLUTARYL COENZYME A SYNTHASE"/>
    <property type="match status" value="1"/>
</dbReference>
<dbReference type="PANTHER" id="PTHR43323:SF2">
    <property type="entry name" value="HYDROXYMETHYLGLUTARYL-COA SYNTHASE"/>
    <property type="match status" value="1"/>
</dbReference>
<dbReference type="Pfam" id="PF08541">
    <property type="entry name" value="ACP_syn_III_C"/>
    <property type="match status" value="1"/>
</dbReference>
<dbReference type="Pfam" id="PF00108">
    <property type="entry name" value="Thiolase_N"/>
    <property type="match status" value="1"/>
</dbReference>
<dbReference type="SUPFAM" id="SSF53901">
    <property type="entry name" value="Thiolase-like"/>
    <property type="match status" value="2"/>
</dbReference>
<proteinExistence type="inferred from homology"/>
<name>HMGCS_PYRAR</name>
<sequence length="349" mass="37910">MKVGIVSWGAYIPKYRIRTEEVARIWGDDPLRIVDVYLVDEKSVEGIDEDAVTIAVEAARRAIRRAGIDPKKIGAVYAGTESKPYAVKPISSILVDALGLSNNVFAVDMEFACKAGSEGLVAAIGLVKAGQVEYGMTVGTDTSQGEPGEHLEYSASSGGVALIVGRDGVAAELEAVYSYVSDTPDFWRREGSPYPMHGEGFTGEPAYFRHIIGAAKGLMEKYGYKPSDFAYVVFHQPNGRFPVRAASMLNIPMEKIKPGIVVTHIGNTYNASALMGFAKVLDVAKPGDKILLVPFGSGAGSNAFVFTVTDVVQERQKTGVPTVEDMLRDKIYVDYAQYLKMRKMIKLFD</sequence>
<feature type="chain" id="PRO_1000068447" description="Hydroxymethylglutaryl-CoA synthase">
    <location>
        <begin position="1"/>
        <end position="349"/>
    </location>
</feature>
<feature type="active site" description="Proton donor/acceptor" evidence="1">
    <location>
        <position position="81"/>
    </location>
</feature>
<feature type="active site" description="Acyl-thioester intermediate" evidence="1">
    <location>
        <position position="113"/>
    </location>
</feature>
<feature type="active site" description="Proton donor/acceptor" evidence="1">
    <location>
        <position position="235"/>
    </location>
</feature>
<feature type="binding site" evidence="1">
    <location>
        <position position="29"/>
    </location>
    <ligand>
        <name>(3S)-3-hydroxy-3-methylglutaryl-CoA</name>
        <dbReference type="ChEBI" id="CHEBI:43074"/>
    </ligand>
</feature>
<feature type="binding site" evidence="1">
    <location>
        <position position="113"/>
    </location>
    <ligand>
        <name>(3S)-3-hydroxy-3-methylglutaryl-CoA</name>
        <dbReference type="ChEBI" id="CHEBI:43074"/>
    </ligand>
</feature>
<feature type="binding site" evidence="1">
    <location>
        <position position="154"/>
    </location>
    <ligand>
        <name>(3S)-3-hydroxy-3-methylglutaryl-CoA</name>
        <dbReference type="ChEBI" id="CHEBI:43074"/>
    </ligand>
</feature>
<feature type="binding site" evidence="1">
    <location>
        <position position="202"/>
    </location>
    <ligand>
        <name>(3S)-3-hydroxy-3-methylglutaryl-CoA</name>
        <dbReference type="ChEBI" id="CHEBI:43074"/>
    </ligand>
</feature>
<feature type="binding site" evidence="1">
    <location>
        <position position="235"/>
    </location>
    <ligand>
        <name>(3S)-3-hydroxy-3-methylglutaryl-CoA</name>
        <dbReference type="ChEBI" id="CHEBI:43074"/>
    </ligand>
</feature>
<feature type="binding site" evidence="1">
    <location>
        <position position="240"/>
    </location>
    <ligand>
        <name>CoA</name>
        <dbReference type="ChEBI" id="CHEBI:57287"/>
        <note>ligand shared with acetoacetyl-CoA thiolase</note>
    </ligand>
</feature>
<feature type="binding site" evidence="1">
    <location>
        <position position="244"/>
    </location>
    <ligand>
        <name>(3S)-3-hydroxy-3-methylglutaryl-CoA</name>
        <dbReference type="ChEBI" id="CHEBI:43074"/>
    </ligand>
</feature>
<feature type="binding site" evidence="1">
    <location>
        <position position="267"/>
    </location>
    <ligand>
        <name>(3S)-3-hydroxy-3-methylglutaryl-CoA</name>
        <dbReference type="ChEBI" id="CHEBI:43074"/>
    </ligand>
</feature>
<feature type="binding site" evidence="1">
    <location>
        <position position="297"/>
    </location>
    <ligand>
        <name>(3S)-3-hydroxy-3-methylglutaryl-CoA</name>
        <dbReference type="ChEBI" id="CHEBI:43074"/>
    </ligand>
</feature>
<gene>
    <name type="ordered locus">Pars_0793</name>
</gene>
<evidence type="ECO:0000255" key="1">
    <source>
        <dbReference type="HAMAP-Rule" id="MF_01409"/>
    </source>
</evidence>
<organism>
    <name type="scientific">Pyrobaculum arsenaticum (strain DSM 13514 / JCM 11321 / PZ6)</name>
    <dbReference type="NCBI Taxonomy" id="340102"/>
    <lineage>
        <taxon>Archaea</taxon>
        <taxon>Thermoproteota</taxon>
        <taxon>Thermoprotei</taxon>
        <taxon>Thermoproteales</taxon>
        <taxon>Thermoproteaceae</taxon>
        <taxon>Pyrobaculum</taxon>
    </lineage>
</organism>